<accession>P13868</accession>
<feature type="initiator methionine" description="Removed" evidence="1">
    <location>
        <position position="1"/>
    </location>
</feature>
<feature type="chain" id="PRO_0000198302" description="Calmodulin-1">
    <location>
        <begin position="2"/>
        <end position="149"/>
    </location>
</feature>
<feature type="domain" description="EF-hand 1" evidence="2">
    <location>
        <begin position="8"/>
        <end position="43"/>
    </location>
</feature>
<feature type="domain" description="EF-hand 2" evidence="2">
    <location>
        <begin position="44"/>
        <end position="79"/>
    </location>
</feature>
<feature type="domain" description="EF-hand 3" evidence="2">
    <location>
        <begin position="81"/>
        <end position="116"/>
    </location>
</feature>
<feature type="domain" description="EF-hand 4" evidence="2">
    <location>
        <begin position="117"/>
        <end position="149"/>
    </location>
</feature>
<feature type="binding site" evidence="2">
    <location>
        <position position="21"/>
    </location>
    <ligand>
        <name>Ca(2+)</name>
        <dbReference type="ChEBI" id="CHEBI:29108"/>
        <label>1</label>
    </ligand>
</feature>
<feature type="binding site" evidence="2">
    <location>
        <position position="23"/>
    </location>
    <ligand>
        <name>Ca(2+)</name>
        <dbReference type="ChEBI" id="CHEBI:29108"/>
        <label>1</label>
    </ligand>
</feature>
<feature type="binding site" evidence="2">
    <location>
        <position position="25"/>
    </location>
    <ligand>
        <name>Ca(2+)</name>
        <dbReference type="ChEBI" id="CHEBI:29108"/>
        <label>1</label>
    </ligand>
</feature>
<feature type="binding site" evidence="2">
    <location>
        <position position="27"/>
    </location>
    <ligand>
        <name>Ca(2+)</name>
        <dbReference type="ChEBI" id="CHEBI:29108"/>
        <label>1</label>
    </ligand>
</feature>
<feature type="binding site" evidence="2">
    <location>
        <position position="32"/>
    </location>
    <ligand>
        <name>Ca(2+)</name>
        <dbReference type="ChEBI" id="CHEBI:29108"/>
        <label>1</label>
    </ligand>
</feature>
<feature type="binding site" evidence="2">
    <location>
        <position position="57"/>
    </location>
    <ligand>
        <name>Ca(2+)</name>
        <dbReference type="ChEBI" id="CHEBI:29108"/>
        <label>2</label>
    </ligand>
</feature>
<feature type="binding site" evidence="2">
    <location>
        <position position="59"/>
    </location>
    <ligand>
        <name>Ca(2+)</name>
        <dbReference type="ChEBI" id="CHEBI:29108"/>
        <label>2</label>
    </ligand>
</feature>
<feature type="binding site" evidence="2">
    <location>
        <position position="61"/>
    </location>
    <ligand>
        <name>Ca(2+)</name>
        <dbReference type="ChEBI" id="CHEBI:29108"/>
        <label>2</label>
    </ligand>
</feature>
<feature type="binding site" evidence="2">
    <location>
        <position position="63"/>
    </location>
    <ligand>
        <name>Ca(2+)</name>
        <dbReference type="ChEBI" id="CHEBI:29108"/>
        <label>2</label>
    </ligand>
</feature>
<feature type="binding site" evidence="2">
    <location>
        <position position="68"/>
    </location>
    <ligand>
        <name>Ca(2+)</name>
        <dbReference type="ChEBI" id="CHEBI:29108"/>
        <label>2</label>
    </ligand>
</feature>
<feature type="binding site" evidence="2">
    <location>
        <position position="94"/>
    </location>
    <ligand>
        <name>Ca(2+)</name>
        <dbReference type="ChEBI" id="CHEBI:29108"/>
        <label>3</label>
    </ligand>
</feature>
<feature type="binding site" evidence="2">
    <location>
        <position position="96"/>
    </location>
    <ligand>
        <name>Ca(2+)</name>
        <dbReference type="ChEBI" id="CHEBI:29108"/>
        <label>3</label>
    </ligand>
</feature>
<feature type="binding site" evidence="2">
    <location>
        <position position="98"/>
    </location>
    <ligand>
        <name>Ca(2+)</name>
        <dbReference type="ChEBI" id="CHEBI:29108"/>
        <label>3</label>
    </ligand>
</feature>
<feature type="binding site" evidence="2">
    <location>
        <position position="105"/>
    </location>
    <ligand>
        <name>Ca(2+)</name>
        <dbReference type="ChEBI" id="CHEBI:29108"/>
        <label>3</label>
    </ligand>
</feature>
<feature type="binding site" evidence="2">
    <location>
        <position position="130"/>
    </location>
    <ligand>
        <name>Ca(2+)</name>
        <dbReference type="ChEBI" id="CHEBI:29108"/>
        <label>4</label>
    </ligand>
</feature>
<feature type="binding site" evidence="2">
    <location>
        <position position="132"/>
    </location>
    <ligand>
        <name>Ca(2+)</name>
        <dbReference type="ChEBI" id="CHEBI:29108"/>
        <label>4</label>
    </ligand>
</feature>
<feature type="binding site" evidence="2">
    <location>
        <position position="134"/>
    </location>
    <ligand>
        <name>Ca(2+)</name>
        <dbReference type="ChEBI" id="CHEBI:29108"/>
        <label>4</label>
    </ligand>
</feature>
<feature type="binding site" evidence="2">
    <location>
        <position position="136"/>
    </location>
    <ligand>
        <name>Ca(2+)</name>
        <dbReference type="ChEBI" id="CHEBI:29108"/>
        <label>4</label>
    </ligand>
</feature>
<feature type="binding site" evidence="2">
    <location>
        <position position="141"/>
    </location>
    <ligand>
        <name>Ca(2+)</name>
        <dbReference type="ChEBI" id="CHEBI:29108"/>
        <label>4</label>
    </ligand>
</feature>
<feature type="modified residue" description="N-acetylalanine" evidence="1">
    <location>
        <position position="2"/>
    </location>
</feature>
<feature type="modified residue" description="N6,N6,N6-trimethyllysine" evidence="1">
    <location>
        <position position="116"/>
    </location>
</feature>
<keyword id="KW-0007">Acetylation</keyword>
<keyword id="KW-0106">Calcium</keyword>
<keyword id="KW-0479">Metal-binding</keyword>
<keyword id="KW-0488">Methylation</keyword>
<keyword id="KW-1185">Reference proteome</keyword>
<keyword id="KW-0677">Repeat</keyword>
<dbReference type="EMBL" id="J04559">
    <property type="protein sequence ID" value="AAA74405.1"/>
    <property type="molecule type" value="mRNA"/>
</dbReference>
<dbReference type="PIR" id="A32556">
    <property type="entry name" value="MCPO"/>
</dbReference>
<dbReference type="SMR" id="P13868"/>
<dbReference type="IntAct" id="P13868">
    <property type="interactions" value="5"/>
</dbReference>
<dbReference type="STRING" id="4113.P13868"/>
<dbReference type="PaxDb" id="4113-PGSC0003DMT400083971"/>
<dbReference type="eggNOG" id="KOG0027">
    <property type="taxonomic scope" value="Eukaryota"/>
</dbReference>
<dbReference type="InParanoid" id="P13868"/>
<dbReference type="Proteomes" id="UP000011115">
    <property type="component" value="Unassembled WGS sequence"/>
</dbReference>
<dbReference type="ExpressionAtlas" id="P13868">
    <property type="expression patterns" value="baseline and differential"/>
</dbReference>
<dbReference type="GO" id="GO:0005737">
    <property type="term" value="C:cytoplasm"/>
    <property type="evidence" value="ECO:0000318"/>
    <property type="project" value="GO_Central"/>
</dbReference>
<dbReference type="GO" id="GO:0005509">
    <property type="term" value="F:calcium ion binding"/>
    <property type="evidence" value="ECO:0000318"/>
    <property type="project" value="GO_Central"/>
</dbReference>
<dbReference type="GO" id="GO:0030234">
    <property type="term" value="F:enzyme regulator activity"/>
    <property type="evidence" value="ECO:0000318"/>
    <property type="project" value="GO_Central"/>
</dbReference>
<dbReference type="CDD" id="cd00051">
    <property type="entry name" value="EFh"/>
    <property type="match status" value="2"/>
</dbReference>
<dbReference type="FunFam" id="1.10.238.10:FF:000034">
    <property type="entry name" value="Calmodulin"/>
    <property type="match status" value="1"/>
</dbReference>
<dbReference type="FunFam" id="1.10.238.10:FF:000042">
    <property type="entry name" value="Calmodulin"/>
    <property type="match status" value="1"/>
</dbReference>
<dbReference type="Gene3D" id="1.10.238.10">
    <property type="entry name" value="EF-hand"/>
    <property type="match status" value="3"/>
</dbReference>
<dbReference type="InterPro" id="IPR050230">
    <property type="entry name" value="CALM/Myosin/TropC-like"/>
</dbReference>
<dbReference type="InterPro" id="IPR011992">
    <property type="entry name" value="EF-hand-dom_pair"/>
</dbReference>
<dbReference type="InterPro" id="IPR018247">
    <property type="entry name" value="EF_Hand_1_Ca_BS"/>
</dbReference>
<dbReference type="InterPro" id="IPR002048">
    <property type="entry name" value="EF_hand_dom"/>
</dbReference>
<dbReference type="PANTHER" id="PTHR23048:SF53">
    <property type="entry name" value="CALMODULIN"/>
    <property type="match status" value="1"/>
</dbReference>
<dbReference type="PANTHER" id="PTHR23048">
    <property type="entry name" value="MYOSIN LIGHT CHAIN 1, 3"/>
    <property type="match status" value="1"/>
</dbReference>
<dbReference type="Pfam" id="PF13499">
    <property type="entry name" value="EF-hand_7"/>
    <property type="match status" value="2"/>
</dbReference>
<dbReference type="SMART" id="SM00054">
    <property type="entry name" value="EFh"/>
    <property type="match status" value="4"/>
</dbReference>
<dbReference type="SUPFAM" id="SSF47473">
    <property type="entry name" value="EF-hand"/>
    <property type="match status" value="1"/>
</dbReference>
<dbReference type="PROSITE" id="PS00018">
    <property type="entry name" value="EF_HAND_1"/>
    <property type="match status" value="4"/>
</dbReference>
<dbReference type="PROSITE" id="PS50222">
    <property type="entry name" value="EF_HAND_2"/>
    <property type="match status" value="4"/>
</dbReference>
<name>CALM1_SOLTU</name>
<proteinExistence type="evidence at protein level"/>
<organism>
    <name type="scientific">Solanum tuberosum</name>
    <name type="common">Potato</name>
    <dbReference type="NCBI Taxonomy" id="4113"/>
    <lineage>
        <taxon>Eukaryota</taxon>
        <taxon>Viridiplantae</taxon>
        <taxon>Streptophyta</taxon>
        <taxon>Embryophyta</taxon>
        <taxon>Tracheophyta</taxon>
        <taxon>Spermatophyta</taxon>
        <taxon>Magnoliopsida</taxon>
        <taxon>eudicotyledons</taxon>
        <taxon>Gunneridae</taxon>
        <taxon>Pentapetalae</taxon>
        <taxon>asterids</taxon>
        <taxon>lamiids</taxon>
        <taxon>Solanales</taxon>
        <taxon>Solanaceae</taxon>
        <taxon>Solanoideae</taxon>
        <taxon>Solaneae</taxon>
        <taxon>Solanum</taxon>
    </lineage>
</organism>
<protein>
    <recommendedName>
        <fullName>Calmodulin-1</fullName>
        <shortName>CaM-1</shortName>
    </recommendedName>
</protein>
<comment type="function">
    <text>Calmodulin mediates the control of a large number of enzymes, ion channels and other proteins by Ca(2+). Among the enzymes to be stimulated by the calmodulin-Ca(2+) complex are a number of protein kinases and phosphatases.</text>
</comment>
<comment type="interaction">
    <interactant intactId="EBI-1394541">
        <id>P13868</id>
    </interactant>
    <interactant intactId="EBI-541001">
        <id>Q9FMK7</id>
        <label>BT1</label>
    </interactant>
    <organismsDiffer>true</organismsDiffer>
    <experiments>2</experiments>
</comment>
<comment type="tissue specificity">
    <text evidence="3">High expression in stolon tips and stems, moderate in roots, and very low in leaves. Localized in the meristematic regions of the shoot and root tips, the tip of the developing tuber and the vascular zones of petiole and tuber. Not detected in mesophyll cells.</text>
</comment>
<comment type="developmental stage">
    <text evidence="3">Expression reduced during tuber development.</text>
</comment>
<comment type="induction">
    <text evidence="3">5-fold induction 30 minutes after touching.</text>
</comment>
<comment type="miscellaneous">
    <text>This protein has four functional calcium-binding sites.</text>
</comment>
<comment type="similarity">
    <text evidence="4">Belongs to the calmodulin family.</text>
</comment>
<sequence length="149" mass="16904">MAEQLTEEQIAEFKEAFSLFDKDGDGCITTKELGTVMRSLGQNPTEAELQDMISEADADQNGTIDFPEFLNLMARKMKDTDSEEELKEAFKVFDKDQNGFISAAELRHVMTNLGEKLTDEEVDEMIREADIDGDGQVNYEEFVRMMLAK</sequence>
<evidence type="ECO:0000250" key="1"/>
<evidence type="ECO:0000255" key="2">
    <source>
        <dbReference type="PROSITE-ProRule" id="PRU00448"/>
    </source>
</evidence>
<evidence type="ECO:0000269" key="3">
    <source>
    </source>
</evidence>
<evidence type="ECO:0000305" key="4"/>
<gene>
    <name type="primary">PCM1</name>
</gene>
<reference key="1">
    <citation type="journal article" date="1989" name="Proc. Natl. Acad. Sci. U.S.A.">
        <title>Molecular cloning and sequencing of a cDNA for plant calmodulin: signal-induced changes in the expression of calmodulin.</title>
        <authorList>
            <person name="Jena P.K."/>
            <person name="Reddy A.S.N."/>
            <person name="Poovaiah B.W."/>
        </authorList>
    </citation>
    <scope>NUCLEOTIDE SEQUENCE [MRNA]</scope>
</reference>
<reference key="2">
    <citation type="journal article" date="1995" name="Plant Mol. Biol.">
        <title>Calmodulin gene family in potato: developmental and touch-induced expression of the mRNA encoding a novel isoform.</title>
        <authorList>
            <person name="Takezawa D."/>
            <person name="Liu Z.H."/>
            <person name="An G."/>
            <person name="Poovaiah B.W."/>
        </authorList>
    </citation>
    <scope>NUCLEOTIDE SEQUENCE [MRNA]</scope>
    <scope>INDUCTION</scope>
    <scope>TISSUE SPECIFICITY</scope>
    <scope>DEVELOPMENTAL STAGE</scope>
    <source>
        <strain>cv. Russet Burbank-0</strain>
    </source>
</reference>